<accession>Q08DX7</accession>
<dbReference type="EMBL" id="BT030723">
    <property type="protein sequence ID" value="ABS45039.1"/>
    <property type="molecule type" value="mRNA"/>
</dbReference>
<dbReference type="EMBL" id="BC123522">
    <property type="protein sequence ID" value="AAI23523.1"/>
    <property type="molecule type" value="mRNA"/>
</dbReference>
<dbReference type="RefSeq" id="NP_001070276.1">
    <property type="nucleotide sequence ID" value="NM_001076808.2"/>
</dbReference>
<dbReference type="SMR" id="Q08DX7"/>
<dbReference type="FunCoup" id="Q08DX7">
    <property type="interactions" value="3421"/>
</dbReference>
<dbReference type="STRING" id="9913.ENSBTAP00000019510"/>
<dbReference type="PaxDb" id="9913-ENSBTAP00000019510"/>
<dbReference type="Ensembl" id="ENSBTAT00000019510.7">
    <property type="protein sequence ID" value="ENSBTAP00000019510.5"/>
    <property type="gene ID" value="ENSBTAG00000014653.7"/>
</dbReference>
<dbReference type="GeneID" id="505997"/>
<dbReference type="KEGG" id="bta:505997"/>
<dbReference type="CTD" id="83985"/>
<dbReference type="VEuPathDB" id="HostDB:ENSBTAG00000014653"/>
<dbReference type="VGNC" id="VGNC:110644">
    <property type="gene designation" value="SPNS1"/>
</dbReference>
<dbReference type="eggNOG" id="KOG1330">
    <property type="taxonomic scope" value="Eukaryota"/>
</dbReference>
<dbReference type="GeneTree" id="ENSGT00390000005976"/>
<dbReference type="HOGENOM" id="CLU_001265_5_12_1"/>
<dbReference type="InParanoid" id="Q08DX7"/>
<dbReference type="OMA" id="YICAAGL"/>
<dbReference type="OrthoDB" id="6770063at2759"/>
<dbReference type="TreeFam" id="TF314395"/>
<dbReference type="Proteomes" id="UP000009136">
    <property type="component" value="Chromosome 25"/>
</dbReference>
<dbReference type="Bgee" id="ENSBTAG00000014653">
    <property type="expression patterns" value="Expressed in conceptus and 104 other cell types or tissues"/>
</dbReference>
<dbReference type="GO" id="GO:0005765">
    <property type="term" value="C:lysosomal membrane"/>
    <property type="evidence" value="ECO:0007669"/>
    <property type="project" value="UniProtKB-SubCell"/>
</dbReference>
<dbReference type="GO" id="GO:0016020">
    <property type="term" value="C:membrane"/>
    <property type="evidence" value="ECO:0000318"/>
    <property type="project" value="GO_Central"/>
</dbReference>
<dbReference type="GO" id="GO:0022857">
    <property type="term" value="F:transmembrane transporter activity"/>
    <property type="evidence" value="ECO:0000318"/>
    <property type="project" value="GO_Central"/>
</dbReference>
<dbReference type="GO" id="GO:0051977">
    <property type="term" value="P:lysophospholipid transport"/>
    <property type="evidence" value="ECO:0000318"/>
    <property type="project" value="GO_Central"/>
</dbReference>
<dbReference type="GO" id="GO:0033700">
    <property type="term" value="P:phospholipid efflux"/>
    <property type="evidence" value="ECO:0000318"/>
    <property type="project" value="GO_Central"/>
</dbReference>
<dbReference type="GO" id="GO:0035751">
    <property type="term" value="P:regulation of lysosomal lumen pH"/>
    <property type="evidence" value="ECO:0007669"/>
    <property type="project" value="Ensembl"/>
</dbReference>
<dbReference type="CDD" id="cd17328">
    <property type="entry name" value="MFS_spinster_like"/>
    <property type="match status" value="1"/>
</dbReference>
<dbReference type="FunFam" id="1.20.1250.20:FF:000097">
    <property type="entry name" value="protein spinster homolog 1"/>
    <property type="match status" value="1"/>
</dbReference>
<dbReference type="Gene3D" id="1.20.1250.20">
    <property type="entry name" value="MFS general substrate transporter like domains"/>
    <property type="match status" value="1"/>
</dbReference>
<dbReference type="InterPro" id="IPR011701">
    <property type="entry name" value="MFS"/>
</dbReference>
<dbReference type="InterPro" id="IPR020846">
    <property type="entry name" value="MFS_dom"/>
</dbReference>
<dbReference type="InterPro" id="IPR044770">
    <property type="entry name" value="MFS_spinster-like"/>
</dbReference>
<dbReference type="InterPro" id="IPR036259">
    <property type="entry name" value="MFS_trans_sf"/>
</dbReference>
<dbReference type="PANTHER" id="PTHR23505:SF13">
    <property type="entry name" value="PROTEIN SPINSTER HOMOLOG 1"/>
    <property type="match status" value="1"/>
</dbReference>
<dbReference type="PANTHER" id="PTHR23505">
    <property type="entry name" value="SPINSTER"/>
    <property type="match status" value="1"/>
</dbReference>
<dbReference type="Pfam" id="PF07690">
    <property type="entry name" value="MFS_1"/>
    <property type="match status" value="1"/>
</dbReference>
<dbReference type="SUPFAM" id="SSF103473">
    <property type="entry name" value="MFS general substrate transporter"/>
    <property type="match status" value="1"/>
</dbReference>
<dbReference type="PROSITE" id="PS50850">
    <property type="entry name" value="MFS"/>
    <property type="match status" value="1"/>
</dbReference>
<evidence type="ECO:0000250" key="1"/>
<evidence type="ECO:0000250" key="2">
    <source>
        <dbReference type="UniProtKB" id="Q9H2V7"/>
    </source>
</evidence>
<evidence type="ECO:0000255" key="3"/>
<evidence type="ECO:0000256" key="4">
    <source>
        <dbReference type="SAM" id="MobiDB-lite"/>
    </source>
</evidence>
<evidence type="ECO:0000305" key="5"/>
<gene>
    <name type="primary">SPNS1</name>
</gene>
<sequence length="528" mass="56519">MSGSDTAPFLSQADDTDDGPAPGTPGLPGSMGNPKSEDPAVPDQEGLQRITGLSSGHSALIVAVLCYINLLNYMDRFTVAGVLPDIEQFFDIGDGSSGLIQTVFISSYMVLAPVFGYLGDRYNRKYLMCGGIAFWSLVTLGSSFIPRERFWLLLLTRGLVGVGEASYSTIAPTLIADLFVADQRSRMLSVFYFAIPVGSGLGYIAGSKVKDVAGDWHWALRVTPGLGVLAVVLLFLVVQEPPRGAVERHSDSPPLNPTSWWADLRALARNPSFILSSLGFTAVAFVTGSLALWAPAFLLRSRVVLGETPPCLPGDSCSSSDSLIFGLITCLTGVLGVGLGVEISRRLRRTNPRADPLVCAAGLLGSAPFLFLALACARGSIVATYIFIFIGETLLSMNWAIVADILLYVVIPTRRSTAEAFQIVLSHLLGDAGSPYLIGSISDRLRRDWPPSFLSEFRALQFSLMLCAFVGALGGAAFLGTAIFIESDRRQAQLHVQGLLPETGPTDDRIVVPQRGRSTRVPVSSVLI</sequence>
<keyword id="KW-0445">Lipid transport</keyword>
<keyword id="KW-0458">Lysosome</keyword>
<keyword id="KW-0472">Membrane</keyword>
<keyword id="KW-0597">Phosphoprotein</keyword>
<keyword id="KW-1185">Reference proteome</keyword>
<keyword id="KW-0812">Transmembrane</keyword>
<keyword id="KW-1133">Transmembrane helix</keyword>
<keyword id="KW-0813">Transport</keyword>
<feature type="chain" id="PRO_0000305038" description="Protein spinster homolog 1">
    <location>
        <begin position="1"/>
        <end position="528"/>
    </location>
</feature>
<feature type="transmembrane region" description="Helical" evidence="3">
    <location>
        <begin position="50"/>
        <end position="70"/>
    </location>
</feature>
<feature type="transmembrane region" description="Helical" evidence="3">
    <location>
        <begin position="98"/>
        <end position="118"/>
    </location>
</feature>
<feature type="transmembrane region" description="Helical" evidence="3">
    <location>
        <begin position="126"/>
        <end position="146"/>
    </location>
</feature>
<feature type="transmembrane region" description="Helical" evidence="3">
    <location>
        <begin position="160"/>
        <end position="180"/>
    </location>
</feature>
<feature type="transmembrane region" description="Helical" evidence="3">
    <location>
        <begin position="187"/>
        <end position="207"/>
    </location>
</feature>
<feature type="transmembrane region" description="Helical" evidence="3">
    <location>
        <begin position="218"/>
        <end position="238"/>
    </location>
</feature>
<feature type="transmembrane region" description="Helical" evidence="3">
    <location>
        <begin position="278"/>
        <end position="298"/>
    </location>
</feature>
<feature type="transmembrane region" description="Helical" evidence="3">
    <location>
        <begin position="323"/>
        <end position="343"/>
    </location>
</feature>
<feature type="transmembrane region" description="Helical" evidence="3">
    <location>
        <begin position="357"/>
        <end position="377"/>
    </location>
</feature>
<feature type="transmembrane region" description="Helical" evidence="3">
    <location>
        <begin position="381"/>
        <end position="401"/>
    </location>
</feature>
<feature type="transmembrane region" description="Helical" evidence="3">
    <location>
        <begin position="421"/>
        <end position="441"/>
    </location>
</feature>
<feature type="transmembrane region" description="Helical" evidence="3">
    <location>
        <begin position="465"/>
        <end position="485"/>
    </location>
</feature>
<feature type="region of interest" description="Disordered" evidence="4">
    <location>
        <begin position="1"/>
        <end position="44"/>
    </location>
</feature>
<feature type="modified residue" description="Phosphoserine" evidence="2">
    <location>
        <position position="518"/>
    </location>
</feature>
<comment type="function">
    <text evidence="2">Plays a critical role in the phospholipid salvage pathway from lysosomes to the cytosol. Mediates the rate-limiting, proton-dependent, lysosomal efflux of lysophospholipids, which can then be reacylated by acyltransferases in the endoplasmic reticulum to form phospholipids. Selective for zwitterionic headgroups such as lysophosphatidylcholine (LPC) and lysophosphatidylethanolamine (LPE), can also transport lysophosphatidylglycerol (LPG), but not other anionic lysophospholipids, sphingosine, nor sphingomyelin. Transports lysophospholipids with saturated, monounsaturated, and polyunsaturated fatty acids, such as 1-hexadecanoyl-sn-glycero-3-phosphocholine, 1-(9Z-octadecenoyl)-sn-glycero-3-phosphocholine and 1-(4Z,7Z,10Z,13Z,16Z,19Z-docosahexaenoyl)-sn-glycero-3-phosphocholine, respectively. Can also transport lysoplasmalogen (LPC with a fatty alcohol) such as 1-(1Z-hexadecenyl)-sn-glycero-3-phosphocholine. Essential player in lysosomal homeostasis. Crucial for cell survival under conditions of nutrient limitation. May be involved in necrotic or autophagic cell death.</text>
</comment>
<comment type="catalytic activity">
    <reaction evidence="2">
        <text>a 1-acyl-sn-glycero-3-phosphocholine(out) + H(+)(out) = a 1-acyl-sn-glycero-3-phosphocholine(in) + H(+)(in)</text>
        <dbReference type="Rhea" id="RHEA:74435"/>
        <dbReference type="ChEBI" id="CHEBI:15378"/>
        <dbReference type="ChEBI" id="CHEBI:58168"/>
    </reaction>
</comment>
<comment type="catalytic activity">
    <reaction evidence="2">
        <text>1-hexadecanoyl-sn-glycero-3-phosphocholine(out) + H(+)(out) = 1-hexadecanoyl-sn-glycero-3-phosphocholine(in) + H(+)(in)</text>
        <dbReference type="Rhea" id="RHEA:74427"/>
        <dbReference type="ChEBI" id="CHEBI:15378"/>
        <dbReference type="ChEBI" id="CHEBI:72998"/>
    </reaction>
</comment>
<comment type="catalytic activity">
    <reaction evidence="2">
        <text>1-(9Z-octadecenoyl)-sn-glycero-3-phosphocholine(out) + H(+)(out) = 1-(9Z-octadecenoyl)-sn-glycero-3-phosphocholine(in) + H(+)(in)</text>
        <dbReference type="Rhea" id="RHEA:74411"/>
        <dbReference type="ChEBI" id="CHEBI:15378"/>
        <dbReference type="ChEBI" id="CHEBI:28610"/>
    </reaction>
</comment>
<comment type="catalytic activity">
    <reaction evidence="2">
        <text>1-(5Z,8Z,11Z,14Z-eicosatetraenoyl)-sn-glycero-3-phosphocholine(out) + H(+)(out) = 1-(5Z,8Z,11Z,14Z-eicosatetraenoyl)-sn-glycero-3-phosphocholine(in) + H(+)(in)</text>
        <dbReference type="Rhea" id="RHEA:74451"/>
        <dbReference type="ChEBI" id="CHEBI:15378"/>
        <dbReference type="ChEBI" id="CHEBI:74344"/>
    </reaction>
</comment>
<comment type="catalytic activity">
    <reaction evidence="2">
        <text>1-(4Z,7Z,10Z,13Z,16Z,19Z-docosahexaenoyl)-sn-glycero-3-phosphocholine(out) + H(+)(out) = 1-(4Z,7Z,10Z,13Z,16Z,19Z-docosahexaenoyl)-sn-glycero-3-phosphocholine(in) + H(+)(in)</text>
        <dbReference type="Rhea" id="RHEA:74423"/>
        <dbReference type="ChEBI" id="CHEBI:15378"/>
        <dbReference type="ChEBI" id="CHEBI:73873"/>
    </reaction>
</comment>
<comment type="catalytic activity">
    <reaction evidence="2">
        <text>a 1-acyl-sn-glycero-3-phosphoethanolamine(out) + H(+)(out) = a 1-acyl-sn-glycero-3-phosphoethanolamine(in) + H(+)(in)</text>
        <dbReference type="Rhea" id="RHEA:74439"/>
        <dbReference type="ChEBI" id="CHEBI:15378"/>
        <dbReference type="ChEBI" id="CHEBI:64381"/>
    </reaction>
</comment>
<comment type="catalytic activity">
    <reaction evidence="2">
        <text>1-(9Z-octadecenoyl)-sn-glycero-3-phosphoethanolamine(out) + H(+)(out) = 1-(9Z-octadecenoyl)-sn-glycero-3-phosphoethanolamine(in) + H(+)(in)</text>
        <dbReference type="Rhea" id="RHEA:74415"/>
        <dbReference type="ChEBI" id="CHEBI:15378"/>
        <dbReference type="ChEBI" id="CHEBI:74971"/>
    </reaction>
</comment>
<comment type="catalytic activity">
    <reaction evidence="2">
        <text>1-acyl-sn-glycero-3-phospho-(1'-sn-glycerol)(out) + H(+)(out) = 1-acyl-sn-glycero-3-phospho-(1'-sn-glycerol)(in) + H(+)(in)</text>
        <dbReference type="Rhea" id="RHEA:74443"/>
        <dbReference type="ChEBI" id="CHEBI:15378"/>
        <dbReference type="ChEBI" id="CHEBI:64840"/>
    </reaction>
</comment>
<comment type="catalytic activity">
    <reaction evidence="2">
        <text>1-(9Z-octadecenoyl)-sn-glycero-3-phospho-(1'-sn-glycerol)(out) + H(+)(out) = 1-(9Z-octadecenoyl)-sn-glycero-3-phospho-(1'-sn-glycerol)(in) + H(+)(in)</text>
        <dbReference type="Rhea" id="RHEA:74419"/>
        <dbReference type="ChEBI" id="CHEBI:15378"/>
        <dbReference type="ChEBI" id="CHEBI:72828"/>
    </reaction>
</comment>
<comment type="catalytic activity">
    <reaction evidence="2">
        <text>a 1-O-(1Z-alkenyl)-sn-glycero-3-phosphocholine(out) + H(+)(out) = a 1-O-(1Z-alkenyl)-sn-glycero-3-phosphocholine(in) + H(+)(in)</text>
        <dbReference type="Rhea" id="RHEA:74447"/>
        <dbReference type="ChEBI" id="CHEBI:15378"/>
        <dbReference type="ChEBI" id="CHEBI:77287"/>
    </reaction>
</comment>
<comment type="catalytic activity">
    <reaction evidence="2">
        <text>1-(1Z-hexadecenyl)-sn-glycero-3-phosphocholine(out) + H(+)(out) = 1-(1Z-hexadecenyl)-sn-glycero-3-phosphocholine(in) + H(+)(in)</text>
        <dbReference type="Rhea" id="RHEA:74431"/>
        <dbReference type="ChEBI" id="CHEBI:15378"/>
        <dbReference type="ChEBI" id="CHEBI:73850"/>
    </reaction>
</comment>
<comment type="catalytic activity">
    <reaction evidence="2">
        <text>a 1-O-(1Z-alkenyl)-sn-glycero-3-phosphoethanolamine(out) + H(+)(out) = a 1-O-(1Z-alkenyl)-sn-glycero-3-phosphoethanolamine(in) + H(+)(in)</text>
        <dbReference type="Rhea" id="RHEA:74455"/>
        <dbReference type="ChEBI" id="CHEBI:15378"/>
        <dbReference type="ChEBI" id="CHEBI:77288"/>
    </reaction>
</comment>
<comment type="catalytic activity">
    <reaction evidence="2">
        <text>1-O-(1Z-hexadecenyl)-sn-glycero-3-phosphoethanolamine(out) + H(+)(out) = 1-O-(1Z-hexadecenyl)-sn-glycero-3-phosphoethanolamine(in) + H(+)(in)</text>
        <dbReference type="Rhea" id="RHEA:74459"/>
        <dbReference type="ChEBI" id="CHEBI:15378"/>
        <dbReference type="ChEBI" id="CHEBI:133139"/>
    </reaction>
</comment>
<comment type="subunit">
    <text evidence="1">Interacts with BCL2 and BCL2L1.</text>
</comment>
<comment type="subcellular location">
    <subcellularLocation>
        <location evidence="1">Lysosome membrane</location>
        <topology evidence="1">Multi-pass membrane protein</topology>
    </subcellularLocation>
</comment>
<comment type="similarity">
    <text evidence="5">Belongs to the major facilitator superfamily. Spinster (TC 2.A.1.49) family.</text>
</comment>
<organism>
    <name type="scientific">Bos taurus</name>
    <name type="common">Bovine</name>
    <dbReference type="NCBI Taxonomy" id="9913"/>
    <lineage>
        <taxon>Eukaryota</taxon>
        <taxon>Metazoa</taxon>
        <taxon>Chordata</taxon>
        <taxon>Craniata</taxon>
        <taxon>Vertebrata</taxon>
        <taxon>Euteleostomi</taxon>
        <taxon>Mammalia</taxon>
        <taxon>Eutheria</taxon>
        <taxon>Laurasiatheria</taxon>
        <taxon>Artiodactyla</taxon>
        <taxon>Ruminantia</taxon>
        <taxon>Pecora</taxon>
        <taxon>Bovidae</taxon>
        <taxon>Bovinae</taxon>
        <taxon>Bos</taxon>
    </lineage>
</organism>
<name>SPNS1_BOVIN</name>
<protein>
    <recommendedName>
        <fullName>Protein spinster homolog 1</fullName>
    </recommendedName>
    <alternativeName>
        <fullName>BSpin1</fullName>
    </alternativeName>
    <alternativeName>
        <fullName>Spns1</fullName>
    </alternativeName>
</protein>
<reference key="1">
    <citation type="journal article" date="2005" name="BMC Genomics">
        <title>Characterization of 954 bovine full-CDS cDNA sequences.</title>
        <authorList>
            <person name="Harhay G.P."/>
            <person name="Sonstegard T.S."/>
            <person name="Keele J.W."/>
            <person name="Heaton M.P."/>
            <person name="Clawson M.L."/>
            <person name="Snelling W.M."/>
            <person name="Wiedmann R.T."/>
            <person name="Van Tassell C.P."/>
            <person name="Smith T.P.L."/>
        </authorList>
    </citation>
    <scope>NUCLEOTIDE SEQUENCE [LARGE SCALE MRNA]</scope>
</reference>
<reference key="2">
    <citation type="submission" date="2006-09" db="EMBL/GenBank/DDBJ databases">
        <authorList>
            <consortium name="NIH - Mammalian Gene Collection (MGC) project"/>
        </authorList>
    </citation>
    <scope>NUCLEOTIDE SEQUENCE [LARGE SCALE MRNA]</scope>
    <source>
        <strain>Hereford</strain>
        <tissue>Fetal pons</tissue>
    </source>
</reference>
<proteinExistence type="evidence at transcript level"/>